<evidence type="ECO:0000255" key="1">
    <source>
        <dbReference type="HAMAP-Rule" id="MF_00406"/>
    </source>
</evidence>
<name>FABZ_BURO1</name>
<accession>Q1BHH1</accession>
<keyword id="KW-0963">Cytoplasm</keyword>
<keyword id="KW-0441">Lipid A biosynthesis</keyword>
<keyword id="KW-0444">Lipid biosynthesis</keyword>
<keyword id="KW-0443">Lipid metabolism</keyword>
<keyword id="KW-0456">Lyase</keyword>
<protein>
    <recommendedName>
        <fullName evidence="1">3-hydroxyacyl-[acyl-carrier-protein] dehydratase FabZ</fullName>
        <ecNumber evidence="1">4.2.1.59</ecNumber>
    </recommendedName>
    <alternativeName>
        <fullName evidence="1">(3R)-hydroxymyristoyl-[acyl-carrier-protein] dehydratase</fullName>
        <shortName evidence="1">(3R)-hydroxymyristoyl-ACP dehydrase</shortName>
    </alternativeName>
    <alternativeName>
        <fullName evidence="1">Beta-hydroxyacyl-ACP dehydratase</fullName>
    </alternativeName>
</protein>
<organism>
    <name type="scientific">Burkholderia orbicola (strain AU 1054)</name>
    <dbReference type="NCBI Taxonomy" id="331271"/>
    <lineage>
        <taxon>Bacteria</taxon>
        <taxon>Pseudomonadati</taxon>
        <taxon>Pseudomonadota</taxon>
        <taxon>Betaproteobacteria</taxon>
        <taxon>Burkholderiales</taxon>
        <taxon>Burkholderiaceae</taxon>
        <taxon>Burkholderia</taxon>
        <taxon>Burkholderia cepacia complex</taxon>
        <taxon>Burkholderia orbicola</taxon>
    </lineage>
</organism>
<reference key="1">
    <citation type="submission" date="2006-05" db="EMBL/GenBank/DDBJ databases">
        <title>Complete sequence of chromosome 3 of Burkholderia cenocepacia AU 1054.</title>
        <authorList>
            <consortium name="US DOE Joint Genome Institute"/>
            <person name="Copeland A."/>
            <person name="Lucas S."/>
            <person name="Lapidus A."/>
            <person name="Barry K."/>
            <person name="Detter J.C."/>
            <person name="Glavina del Rio T."/>
            <person name="Hammon N."/>
            <person name="Israni S."/>
            <person name="Dalin E."/>
            <person name="Tice H."/>
            <person name="Pitluck S."/>
            <person name="Chain P."/>
            <person name="Malfatti S."/>
            <person name="Shin M."/>
            <person name="Vergez L."/>
            <person name="Schmutz J."/>
            <person name="Larimer F."/>
            <person name="Land M."/>
            <person name="Hauser L."/>
            <person name="Kyrpides N."/>
            <person name="Lykidis A."/>
            <person name="LiPuma J.J."/>
            <person name="Konstantinidis K."/>
            <person name="Tiedje J.M."/>
            <person name="Richardson P."/>
        </authorList>
    </citation>
    <scope>NUCLEOTIDE SEQUENCE [LARGE SCALE GENOMIC DNA]</scope>
    <source>
        <strain>AU 1054</strain>
    </source>
</reference>
<proteinExistence type="inferred from homology"/>
<dbReference type="EC" id="4.2.1.59" evidence="1"/>
<dbReference type="EMBL" id="CP000380">
    <property type="protein sequence ID" value="ABF80934.1"/>
    <property type="molecule type" value="Genomic_DNA"/>
</dbReference>
<dbReference type="SMR" id="Q1BHH1"/>
<dbReference type="HOGENOM" id="CLU_078912_1_0_4"/>
<dbReference type="GO" id="GO:0005737">
    <property type="term" value="C:cytoplasm"/>
    <property type="evidence" value="ECO:0007669"/>
    <property type="project" value="UniProtKB-SubCell"/>
</dbReference>
<dbReference type="GO" id="GO:0016020">
    <property type="term" value="C:membrane"/>
    <property type="evidence" value="ECO:0007669"/>
    <property type="project" value="GOC"/>
</dbReference>
<dbReference type="GO" id="GO:0019171">
    <property type="term" value="F:(3R)-hydroxyacyl-[acyl-carrier-protein] dehydratase activity"/>
    <property type="evidence" value="ECO:0007669"/>
    <property type="project" value="UniProtKB-EC"/>
</dbReference>
<dbReference type="GO" id="GO:0006633">
    <property type="term" value="P:fatty acid biosynthetic process"/>
    <property type="evidence" value="ECO:0007669"/>
    <property type="project" value="UniProtKB-UniRule"/>
</dbReference>
<dbReference type="GO" id="GO:0009245">
    <property type="term" value="P:lipid A biosynthetic process"/>
    <property type="evidence" value="ECO:0007669"/>
    <property type="project" value="UniProtKB-UniRule"/>
</dbReference>
<dbReference type="CDD" id="cd01288">
    <property type="entry name" value="FabZ"/>
    <property type="match status" value="1"/>
</dbReference>
<dbReference type="FunFam" id="3.10.129.10:FF:000001">
    <property type="entry name" value="3-hydroxyacyl-[acyl-carrier-protein] dehydratase FabZ"/>
    <property type="match status" value="1"/>
</dbReference>
<dbReference type="Gene3D" id="3.10.129.10">
    <property type="entry name" value="Hotdog Thioesterase"/>
    <property type="match status" value="1"/>
</dbReference>
<dbReference type="HAMAP" id="MF_00406">
    <property type="entry name" value="FabZ"/>
    <property type="match status" value="1"/>
</dbReference>
<dbReference type="InterPro" id="IPR013114">
    <property type="entry name" value="FabA_FabZ"/>
</dbReference>
<dbReference type="InterPro" id="IPR010084">
    <property type="entry name" value="FabZ"/>
</dbReference>
<dbReference type="InterPro" id="IPR029069">
    <property type="entry name" value="HotDog_dom_sf"/>
</dbReference>
<dbReference type="NCBIfam" id="TIGR01750">
    <property type="entry name" value="fabZ"/>
    <property type="match status" value="1"/>
</dbReference>
<dbReference type="NCBIfam" id="NF000582">
    <property type="entry name" value="PRK00006.1"/>
    <property type="match status" value="1"/>
</dbReference>
<dbReference type="PANTHER" id="PTHR30272">
    <property type="entry name" value="3-HYDROXYACYL-[ACYL-CARRIER-PROTEIN] DEHYDRATASE"/>
    <property type="match status" value="1"/>
</dbReference>
<dbReference type="PANTHER" id="PTHR30272:SF1">
    <property type="entry name" value="3-HYDROXYACYL-[ACYL-CARRIER-PROTEIN] DEHYDRATASE"/>
    <property type="match status" value="1"/>
</dbReference>
<dbReference type="Pfam" id="PF07977">
    <property type="entry name" value="FabA"/>
    <property type="match status" value="1"/>
</dbReference>
<dbReference type="SUPFAM" id="SSF54637">
    <property type="entry name" value="Thioesterase/thiol ester dehydrase-isomerase"/>
    <property type="match status" value="1"/>
</dbReference>
<feature type="chain" id="PRO_0000301882" description="3-hydroxyacyl-[acyl-carrier-protein] dehydratase FabZ">
    <location>
        <begin position="1"/>
        <end position="155"/>
    </location>
</feature>
<feature type="active site" evidence="1">
    <location>
        <position position="54"/>
    </location>
</feature>
<gene>
    <name evidence="1" type="primary">fabZ</name>
    <name type="ordered locus">Bcen_6069</name>
</gene>
<sequence>MSTEKINLDIHKILTLLPHRYPILLVDRVLELEPHKGIKALKNVSINEPFFQGHFPKRPVMPGVLILEALAQAAALLTFAEEQPKDPENTLYYFVGIDGARFKRVVEPGDQLILNVTFERYIRGIWKFKAVAEVDGKVAAEAELMCTVKTADAAP</sequence>
<comment type="function">
    <text evidence="1">Involved in unsaturated fatty acids biosynthesis. Catalyzes the dehydration of short chain beta-hydroxyacyl-ACPs and long chain saturated and unsaturated beta-hydroxyacyl-ACPs.</text>
</comment>
<comment type="catalytic activity">
    <reaction evidence="1">
        <text>a (3R)-hydroxyacyl-[ACP] = a (2E)-enoyl-[ACP] + H2O</text>
        <dbReference type="Rhea" id="RHEA:13097"/>
        <dbReference type="Rhea" id="RHEA-COMP:9925"/>
        <dbReference type="Rhea" id="RHEA-COMP:9945"/>
        <dbReference type="ChEBI" id="CHEBI:15377"/>
        <dbReference type="ChEBI" id="CHEBI:78784"/>
        <dbReference type="ChEBI" id="CHEBI:78827"/>
        <dbReference type="EC" id="4.2.1.59"/>
    </reaction>
</comment>
<comment type="subcellular location">
    <subcellularLocation>
        <location evidence="1">Cytoplasm</location>
    </subcellularLocation>
</comment>
<comment type="similarity">
    <text evidence="1">Belongs to the thioester dehydratase family. FabZ subfamily.</text>
</comment>